<accession>B7NJS7</accession>
<dbReference type="EC" id="2.3.1.234" evidence="1"/>
<dbReference type="EMBL" id="CU928164">
    <property type="protein sequence ID" value="CAR19676.1"/>
    <property type="molecule type" value="Genomic_DNA"/>
</dbReference>
<dbReference type="RefSeq" id="WP_001264365.1">
    <property type="nucleotide sequence ID" value="NC_011750.1"/>
</dbReference>
<dbReference type="RefSeq" id="YP_002409464.1">
    <property type="nucleotide sequence ID" value="NC_011750.1"/>
</dbReference>
<dbReference type="SMR" id="B7NJS7"/>
<dbReference type="STRING" id="585057.ECIAI39_3560"/>
<dbReference type="GeneID" id="93778929"/>
<dbReference type="KEGG" id="ect:ECIAI39_3560"/>
<dbReference type="PATRIC" id="fig|585057.6.peg.3689"/>
<dbReference type="HOGENOM" id="CLU_023208_0_2_6"/>
<dbReference type="Proteomes" id="UP000000749">
    <property type="component" value="Chromosome"/>
</dbReference>
<dbReference type="GO" id="GO:0005737">
    <property type="term" value="C:cytoplasm"/>
    <property type="evidence" value="ECO:0007669"/>
    <property type="project" value="UniProtKB-SubCell"/>
</dbReference>
<dbReference type="GO" id="GO:0005506">
    <property type="term" value="F:iron ion binding"/>
    <property type="evidence" value="ECO:0007669"/>
    <property type="project" value="UniProtKB-UniRule"/>
</dbReference>
<dbReference type="GO" id="GO:0061711">
    <property type="term" value="F:N(6)-L-threonylcarbamoyladenine synthase activity"/>
    <property type="evidence" value="ECO:0007669"/>
    <property type="project" value="UniProtKB-EC"/>
</dbReference>
<dbReference type="GO" id="GO:0002949">
    <property type="term" value="P:tRNA threonylcarbamoyladenosine modification"/>
    <property type="evidence" value="ECO:0007669"/>
    <property type="project" value="UniProtKB-UniRule"/>
</dbReference>
<dbReference type="CDD" id="cd24097">
    <property type="entry name" value="ASKHA_NBD_TsaD-like"/>
    <property type="match status" value="1"/>
</dbReference>
<dbReference type="FunFam" id="3.30.420.40:FF:000031">
    <property type="entry name" value="tRNA N6-adenosine threonylcarbamoyltransferase"/>
    <property type="match status" value="1"/>
</dbReference>
<dbReference type="Gene3D" id="3.30.420.40">
    <property type="match status" value="2"/>
</dbReference>
<dbReference type="HAMAP" id="MF_01445">
    <property type="entry name" value="TsaD"/>
    <property type="match status" value="1"/>
</dbReference>
<dbReference type="InterPro" id="IPR043129">
    <property type="entry name" value="ATPase_NBD"/>
</dbReference>
<dbReference type="InterPro" id="IPR000905">
    <property type="entry name" value="Gcp-like_dom"/>
</dbReference>
<dbReference type="InterPro" id="IPR017861">
    <property type="entry name" value="KAE1/TsaD"/>
</dbReference>
<dbReference type="InterPro" id="IPR017860">
    <property type="entry name" value="Peptidase_M22_CS"/>
</dbReference>
<dbReference type="InterPro" id="IPR022450">
    <property type="entry name" value="TsaD"/>
</dbReference>
<dbReference type="NCBIfam" id="TIGR00329">
    <property type="entry name" value="gcp_kae1"/>
    <property type="match status" value="1"/>
</dbReference>
<dbReference type="NCBIfam" id="TIGR03723">
    <property type="entry name" value="T6A_TsaD_YgjD"/>
    <property type="match status" value="1"/>
</dbReference>
<dbReference type="PANTHER" id="PTHR11735">
    <property type="entry name" value="TRNA N6-ADENOSINE THREONYLCARBAMOYLTRANSFERASE"/>
    <property type="match status" value="1"/>
</dbReference>
<dbReference type="PANTHER" id="PTHR11735:SF6">
    <property type="entry name" value="TRNA N6-ADENOSINE THREONYLCARBAMOYLTRANSFERASE, MITOCHONDRIAL"/>
    <property type="match status" value="1"/>
</dbReference>
<dbReference type="Pfam" id="PF00814">
    <property type="entry name" value="TsaD"/>
    <property type="match status" value="1"/>
</dbReference>
<dbReference type="PRINTS" id="PR00789">
    <property type="entry name" value="OSIALOPTASE"/>
</dbReference>
<dbReference type="SUPFAM" id="SSF53067">
    <property type="entry name" value="Actin-like ATPase domain"/>
    <property type="match status" value="1"/>
</dbReference>
<dbReference type="PROSITE" id="PS01016">
    <property type="entry name" value="GLYCOPROTEASE"/>
    <property type="match status" value="1"/>
</dbReference>
<keyword id="KW-0012">Acyltransferase</keyword>
<keyword id="KW-0963">Cytoplasm</keyword>
<keyword id="KW-0408">Iron</keyword>
<keyword id="KW-0479">Metal-binding</keyword>
<keyword id="KW-0808">Transferase</keyword>
<keyword id="KW-0819">tRNA processing</keyword>
<sequence>MRVLGIETSCDETGIAIYDDEKGLLANQLYSQVKLHADYGGVVPELASRDHVRKTVPLIQAALKESGLTAKDIDAVAYTAGPGLVGALLVGATVGRSLAFAWNVPAIPVHHMEGHLLAPMLEDNPPEFPFVALLVSGGHTQLISVTGIGQYELLGESIDDAAGEAFDKTAKLLGLDYPGGPLLSKMAAQGTAGRFVFPRPMTDRPGLDFSFSGLKTFAANTIRDNGTDDQTRADIARAFEDAVVDTLMIKCKRALDQTGFKRLVMAGGVSANRTLRAKLAEMMKKRRGEVFYARPEFCTDNGAMIAYAGMVRFKAGATADLGVSVRPRWPLAELPAA</sequence>
<gene>
    <name evidence="1" type="primary">tsaD</name>
    <name type="synonym">gcp</name>
    <name type="ordered locus">ECIAI39_3560</name>
</gene>
<proteinExistence type="inferred from homology"/>
<evidence type="ECO:0000255" key="1">
    <source>
        <dbReference type="HAMAP-Rule" id="MF_01445"/>
    </source>
</evidence>
<organism>
    <name type="scientific">Escherichia coli O7:K1 (strain IAI39 / ExPEC)</name>
    <dbReference type="NCBI Taxonomy" id="585057"/>
    <lineage>
        <taxon>Bacteria</taxon>
        <taxon>Pseudomonadati</taxon>
        <taxon>Pseudomonadota</taxon>
        <taxon>Gammaproteobacteria</taxon>
        <taxon>Enterobacterales</taxon>
        <taxon>Enterobacteriaceae</taxon>
        <taxon>Escherichia</taxon>
    </lineage>
</organism>
<comment type="function">
    <text evidence="1">Required for the formation of a threonylcarbamoyl group on adenosine at position 37 (t(6)A37) in tRNAs that read codons beginning with adenine. Is involved in the transfer of the threonylcarbamoyl moiety of threonylcarbamoyl-AMP (TC-AMP) to the N6 group of A37, together with TsaE and TsaB. TsaD likely plays a direct catalytic role in this reaction.</text>
</comment>
<comment type="catalytic activity">
    <reaction evidence="1">
        <text>L-threonylcarbamoyladenylate + adenosine(37) in tRNA = N(6)-L-threonylcarbamoyladenosine(37) in tRNA + AMP + H(+)</text>
        <dbReference type="Rhea" id="RHEA:37059"/>
        <dbReference type="Rhea" id="RHEA-COMP:10162"/>
        <dbReference type="Rhea" id="RHEA-COMP:10163"/>
        <dbReference type="ChEBI" id="CHEBI:15378"/>
        <dbReference type="ChEBI" id="CHEBI:73682"/>
        <dbReference type="ChEBI" id="CHEBI:74411"/>
        <dbReference type="ChEBI" id="CHEBI:74418"/>
        <dbReference type="ChEBI" id="CHEBI:456215"/>
        <dbReference type="EC" id="2.3.1.234"/>
    </reaction>
</comment>
<comment type="cofactor">
    <cofactor evidence="1">
        <name>Fe(2+)</name>
        <dbReference type="ChEBI" id="CHEBI:29033"/>
    </cofactor>
    <text evidence="1">Binds 1 Fe(2+) ion per subunit.</text>
</comment>
<comment type="subcellular location">
    <subcellularLocation>
        <location evidence="1">Cytoplasm</location>
    </subcellularLocation>
</comment>
<comment type="similarity">
    <text evidence="1">Belongs to the KAE1 / TsaD family.</text>
</comment>
<feature type="chain" id="PRO_1000145976" description="tRNA N6-adenosine threonylcarbamoyltransferase">
    <location>
        <begin position="1"/>
        <end position="337"/>
    </location>
</feature>
<feature type="binding site" evidence="1">
    <location>
        <position position="111"/>
    </location>
    <ligand>
        <name>Fe cation</name>
        <dbReference type="ChEBI" id="CHEBI:24875"/>
    </ligand>
</feature>
<feature type="binding site" evidence="1">
    <location>
        <position position="115"/>
    </location>
    <ligand>
        <name>Fe cation</name>
        <dbReference type="ChEBI" id="CHEBI:24875"/>
    </ligand>
</feature>
<feature type="binding site" evidence="1">
    <location>
        <begin position="134"/>
        <end position="138"/>
    </location>
    <ligand>
        <name>substrate</name>
    </ligand>
</feature>
<feature type="binding site" evidence="1">
    <location>
        <position position="167"/>
    </location>
    <ligand>
        <name>substrate</name>
    </ligand>
</feature>
<feature type="binding site" evidence="1">
    <location>
        <position position="180"/>
    </location>
    <ligand>
        <name>substrate</name>
    </ligand>
</feature>
<feature type="binding site" evidence="1">
    <location>
        <position position="272"/>
    </location>
    <ligand>
        <name>substrate</name>
    </ligand>
</feature>
<feature type="binding site" evidence="1">
    <location>
        <position position="300"/>
    </location>
    <ligand>
        <name>Fe cation</name>
        <dbReference type="ChEBI" id="CHEBI:24875"/>
    </ligand>
</feature>
<reference key="1">
    <citation type="journal article" date="2009" name="PLoS Genet.">
        <title>Organised genome dynamics in the Escherichia coli species results in highly diverse adaptive paths.</title>
        <authorList>
            <person name="Touchon M."/>
            <person name="Hoede C."/>
            <person name="Tenaillon O."/>
            <person name="Barbe V."/>
            <person name="Baeriswyl S."/>
            <person name="Bidet P."/>
            <person name="Bingen E."/>
            <person name="Bonacorsi S."/>
            <person name="Bouchier C."/>
            <person name="Bouvet O."/>
            <person name="Calteau A."/>
            <person name="Chiapello H."/>
            <person name="Clermont O."/>
            <person name="Cruveiller S."/>
            <person name="Danchin A."/>
            <person name="Diard M."/>
            <person name="Dossat C."/>
            <person name="Karoui M.E."/>
            <person name="Frapy E."/>
            <person name="Garry L."/>
            <person name="Ghigo J.M."/>
            <person name="Gilles A.M."/>
            <person name="Johnson J."/>
            <person name="Le Bouguenec C."/>
            <person name="Lescat M."/>
            <person name="Mangenot S."/>
            <person name="Martinez-Jehanne V."/>
            <person name="Matic I."/>
            <person name="Nassif X."/>
            <person name="Oztas S."/>
            <person name="Petit M.A."/>
            <person name="Pichon C."/>
            <person name="Rouy Z."/>
            <person name="Ruf C.S."/>
            <person name="Schneider D."/>
            <person name="Tourret J."/>
            <person name="Vacherie B."/>
            <person name="Vallenet D."/>
            <person name="Medigue C."/>
            <person name="Rocha E.P.C."/>
            <person name="Denamur E."/>
        </authorList>
    </citation>
    <scope>NUCLEOTIDE SEQUENCE [LARGE SCALE GENOMIC DNA]</scope>
    <source>
        <strain>IAI39 / ExPEC</strain>
    </source>
</reference>
<name>TSAD_ECO7I</name>
<protein>
    <recommendedName>
        <fullName evidence="1">tRNA N6-adenosine threonylcarbamoyltransferase</fullName>
        <ecNumber evidence="1">2.3.1.234</ecNumber>
    </recommendedName>
    <alternativeName>
        <fullName evidence="1">N6-L-threonylcarbamoyladenine synthase</fullName>
        <shortName evidence="1">t(6)A synthase</shortName>
    </alternativeName>
    <alternativeName>
        <fullName evidence="1">t(6)A37 threonylcarbamoyladenosine biosynthesis protein TsaD</fullName>
    </alternativeName>
    <alternativeName>
        <fullName evidence="1">tRNA threonylcarbamoyladenosine biosynthesis protein TsaD</fullName>
    </alternativeName>
</protein>